<evidence type="ECO:0000250" key="1"/>
<evidence type="ECO:0000255" key="2"/>
<evidence type="ECO:0000256" key="3">
    <source>
        <dbReference type="SAM" id="MobiDB-lite"/>
    </source>
</evidence>
<evidence type="ECO:0000269" key="4">
    <source>
    </source>
</evidence>
<evidence type="ECO:0000305" key="5"/>
<evidence type="ECO:0007829" key="6">
    <source>
        <dbReference type="PDB" id="4FLN"/>
    </source>
</evidence>
<evidence type="ECO:0007829" key="7">
    <source>
        <dbReference type="PDB" id="5ILB"/>
    </source>
</evidence>
<gene>
    <name type="primary">DEGP2</name>
    <name type="ordered locus">At2g47940</name>
    <name type="ORF">F17A22.33</name>
    <name type="ORF">T9J23.7</name>
</gene>
<name>DEGP2_ARATH</name>
<sequence length="607" mass="66802">MAASVANCCFSVLNASVKIQSSSISSPWCFVSASSLTPRASSNIKRKSSRSDSPSPILNPEKNYPGRVRDESSNPPQKMAFKAFGSPKKEKKESLSDFSRDQQTDPAKIHDASFLNAVVKVYCTHTAPDYSLPWQKQRQFTSTGSAFMIGDGKLLTNAHCVEHDTQVKVKRRGDDRKYVAKVLVRGVDCDIALLSVESEDFWKGAEPLRLGHLPRLQDSVTVVGYPLGGDTISVTKGVVSRIEVTSYAHGSSDLLGIQIDAAINPGNSGGPAFNDQGECIGVAFQVYRSEETENIGYVIPTTVVSHFLTDYERNGKYTGYPCLGVLLQKLENPALRECLKVPTNEGVLVRRVEPTSDASKVLKEGDVIVSFDDLHVGCEGTVPFRSSERIAFRYLISQKFAGDIAEIGIIRAGEHKKVQVVLRPRVHLVPYHIDGGQPSYIIVAGLVFTPLSEPLIEEECEDTIGLKLLTKARYSVARFRGEQIVILSQVLANEVNIGYEDMNNQQVLKFNGIPIRNIHHLAHLIDMCKDKYLVFEFEDNYVAVLEREASNSASLCILKDYGIPSERSADLLEPYVDPIDDTQALDQGIGDSPVSNLEIGFDGLVWA</sequence>
<dbReference type="EC" id="3.4.21.-"/>
<dbReference type="EMBL" id="AF245171">
    <property type="protein sequence ID" value="AAK14061.1"/>
    <property type="molecule type" value="mRNA"/>
</dbReference>
<dbReference type="EMBL" id="AC005309">
    <property type="protein sequence ID" value="AAC63648.2"/>
    <property type="molecule type" value="Genomic_DNA"/>
</dbReference>
<dbReference type="EMBL" id="AC006072">
    <property type="protein sequence ID" value="AAM15122.1"/>
    <property type="molecule type" value="Genomic_DNA"/>
</dbReference>
<dbReference type="EMBL" id="CP002685">
    <property type="protein sequence ID" value="AEC10914.1"/>
    <property type="molecule type" value="Genomic_DNA"/>
</dbReference>
<dbReference type="EMBL" id="AF326865">
    <property type="protein sequence ID" value="AAG41447.1"/>
    <property type="molecule type" value="mRNA"/>
</dbReference>
<dbReference type="EMBL" id="AF349516">
    <property type="protein sequence ID" value="AAK15563.1"/>
    <property type="molecule type" value="mRNA"/>
</dbReference>
<dbReference type="EMBL" id="AY075700">
    <property type="protein sequence ID" value="AAL77706.1"/>
    <property type="molecule type" value="mRNA"/>
</dbReference>
<dbReference type="EMBL" id="AY102139">
    <property type="protein sequence ID" value="AAM26706.1"/>
    <property type="molecule type" value="mRNA"/>
</dbReference>
<dbReference type="PIR" id="D84921">
    <property type="entry name" value="D84921"/>
</dbReference>
<dbReference type="RefSeq" id="NP_566115.1">
    <molecule id="O82261-1"/>
    <property type="nucleotide sequence ID" value="NM_130361.5"/>
</dbReference>
<dbReference type="PDB" id="4FLN">
    <property type="method" value="X-ray"/>
    <property type="resolution" value="2.80 A"/>
    <property type="chains" value="A/B/C=71-607"/>
</dbReference>
<dbReference type="PDB" id="5ILB">
    <property type="method" value="X-ray"/>
    <property type="resolution" value="1.85 A"/>
    <property type="chains" value="A/B=110-315"/>
</dbReference>
<dbReference type="PDBsum" id="4FLN"/>
<dbReference type="PDBsum" id="5ILB"/>
<dbReference type="SMR" id="O82261"/>
<dbReference type="FunCoup" id="O82261">
    <property type="interactions" value="1116"/>
</dbReference>
<dbReference type="STRING" id="3702.O82261"/>
<dbReference type="MEROPS" id="S01.279"/>
<dbReference type="iPTMnet" id="O82261"/>
<dbReference type="PaxDb" id="3702-AT2G47940.1"/>
<dbReference type="ProteomicsDB" id="224602">
    <molecule id="O82261-1"/>
</dbReference>
<dbReference type="EnsemblPlants" id="AT2G47940.1">
    <molecule id="O82261-1"/>
    <property type="protein sequence ID" value="AT2G47940.1"/>
    <property type="gene ID" value="AT2G47940"/>
</dbReference>
<dbReference type="GeneID" id="819406"/>
<dbReference type="Gramene" id="AT2G47940.1">
    <molecule id="O82261-1"/>
    <property type="protein sequence ID" value="AT2G47940.1"/>
    <property type="gene ID" value="AT2G47940"/>
</dbReference>
<dbReference type="KEGG" id="ath:AT2G47940"/>
<dbReference type="Araport" id="AT2G47940"/>
<dbReference type="TAIR" id="AT2G47940">
    <property type="gene designation" value="DEG2"/>
</dbReference>
<dbReference type="eggNOG" id="KOG1320">
    <property type="taxonomic scope" value="Eukaryota"/>
</dbReference>
<dbReference type="InParanoid" id="O82261"/>
<dbReference type="OrthoDB" id="4217619at2759"/>
<dbReference type="PhylomeDB" id="O82261"/>
<dbReference type="EvolutionaryTrace" id="O82261"/>
<dbReference type="PRO" id="PR:O82261"/>
<dbReference type="Proteomes" id="UP000006548">
    <property type="component" value="Chromosome 2"/>
</dbReference>
<dbReference type="ExpressionAtlas" id="O82261">
    <property type="expression patterns" value="baseline and differential"/>
</dbReference>
<dbReference type="GO" id="GO:0009507">
    <property type="term" value="C:chloroplast"/>
    <property type="evidence" value="ECO:0007005"/>
    <property type="project" value="TAIR"/>
</dbReference>
<dbReference type="GO" id="GO:0009941">
    <property type="term" value="C:chloroplast envelope"/>
    <property type="evidence" value="ECO:0007005"/>
    <property type="project" value="TAIR"/>
</dbReference>
<dbReference type="GO" id="GO:0009570">
    <property type="term" value="C:chloroplast stroma"/>
    <property type="evidence" value="ECO:0007005"/>
    <property type="project" value="TAIR"/>
</dbReference>
<dbReference type="GO" id="GO:0009533">
    <property type="term" value="C:chloroplast stromal thylakoid"/>
    <property type="evidence" value="ECO:0000314"/>
    <property type="project" value="TAIR"/>
</dbReference>
<dbReference type="GO" id="GO:0009535">
    <property type="term" value="C:chloroplast thylakoid membrane"/>
    <property type="evidence" value="ECO:0000314"/>
    <property type="project" value="TAIR"/>
</dbReference>
<dbReference type="GO" id="GO:0005829">
    <property type="term" value="C:cytosol"/>
    <property type="evidence" value="ECO:0007005"/>
    <property type="project" value="TAIR"/>
</dbReference>
<dbReference type="GO" id="GO:0004252">
    <property type="term" value="F:serine-type endopeptidase activity"/>
    <property type="evidence" value="ECO:0000314"/>
    <property type="project" value="TAIR"/>
</dbReference>
<dbReference type="GO" id="GO:0009658">
    <property type="term" value="P:chloroplast organization"/>
    <property type="evidence" value="ECO:0000315"/>
    <property type="project" value="TAIR"/>
</dbReference>
<dbReference type="GO" id="GO:0010206">
    <property type="term" value="P:photosystem II repair"/>
    <property type="evidence" value="ECO:0000314"/>
    <property type="project" value="TAIR"/>
</dbReference>
<dbReference type="GO" id="GO:0030163">
    <property type="term" value="P:protein catabolic process"/>
    <property type="evidence" value="ECO:0000315"/>
    <property type="project" value="TAIR"/>
</dbReference>
<dbReference type="GO" id="GO:0006508">
    <property type="term" value="P:proteolysis"/>
    <property type="evidence" value="ECO:0007669"/>
    <property type="project" value="UniProtKB-KW"/>
</dbReference>
<dbReference type="CDD" id="cd06779">
    <property type="entry name" value="cpPDZ_Deg_HtrA-like"/>
    <property type="match status" value="1"/>
</dbReference>
<dbReference type="FunFam" id="3.20.190.20:FF:000003">
    <property type="entry name" value="Protease Do-like 2, chloroplastic"/>
    <property type="match status" value="1"/>
</dbReference>
<dbReference type="FunFam" id="2.40.10.10:FF:000131">
    <property type="entry name" value="Protease Do-like 9"/>
    <property type="match status" value="1"/>
</dbReference>
<dbReference type="FunFam" id="2.40.10.10:FF:000012">
    <property type="entry name" value="protease Do-like 9"/>
    <property type="match status" value="1"/>
</dbReference>
<dbReference type="Gene3D" id="2.30.42.10">
    <property type="match status" value="1"/>
</dbReference>
<dbReference type="Gene3D" id="3.20.190.20">
    <property type="match status" value="1"/>
</dbReference>
<dbReference type="Gene3D" id="2.40.10.10">
    <property type="entry name" value="Trypsin-like serine proteases"/>
    <property type="match status" value="2"/>
</dbReference>
<dbReference type="InterPro" id="IPR041517">
    <property type="entry name" value="DEGP_PDZ"/>
</dbReference>
<dbReference type="InterPro" id="IPR046449">
    <property type="entry name" value="DEGP_PDZ_sf"/>
</dbReference>
<dbReference type="InterPro" id="IPR036034">
    <property type="entry name" value="PDZ_sf"/>
</dbReference>
<dbReference type="InterPro" id="IPR009003">
    <property type="entry name" value="Peptidase_S1_PA"/>
</dbReference>
<dbReference type="InterPro" id="IPR043504">
    <property type="entry name" value="Peptidase_S1_PA_chymotrypsin"/>
</dbReference>
<dbReference type="InterPro" id="IPR001940">
    <property type="entry name" value="Peptidase_S1C"/>
</dbReference>
<dbReference type="PANTHER" id="PTHR45980">
    <property type="match status" value="1"/>
</dbReference>
<dbReference type="PANTHER" id="PTHR45980:SF6">
    <property type="entry name" value="PROTEASE DO-LIKE 2, CHLOROPLASTIC"/>
    <property type="match status" value="1"/>
</dbReference>
<dbReference type="Pfam" id="PF17815">
    <property type="entry name" value="PDZ_3"/>
    <property type="match status" value="1"/>
</dbReference>
<dbReference type="Pfam" id="PF13365">
    <property type="entry name" value="Trypsin_2"/>
    <property type="match status" value="1"/>
</dbReference>
<dbReference type="PRINTS" id="PR00834">
    <property type="entry name" value="PROTEASES2C"/>
</dbReference>
<dbReference type="SUPFAM" id="SSF50156">
    <property type="entry name" value="PDZ domain-like"/>
    <property type="match status" value="1"/>
</dbReference>
<dbReference type="SUPFAM" id="SSF50494">
    <property type="entry name" value="Trypsin-like serine proteases"/>
    <property type="match status" value="1"/>
</dbReference>
<accession>O82261</accession>
<accession>Q9FPE9</accession>
<proteinExistence type="evidence at protein level"/>
<organism>
    <name type="scientific">Arabidopsis thaliana</name>
    <name type="common">Mouse-ear cress</name>
    <dbReference type="NCBI Taxonomy" id="3702"/>
    <lineage>
        <taxon>Eukaryota</taxon>
        <taxon>Viridiplantae</taxon>
        <taxon>Streptophyta</taxon>
        <taxon>Embryophyta</taxon>
        <taxon>Tracheophyta</taxon>
        <taxon>Spermatophyta</taxon>
        <taxon>Magnoliopsida</taxon>
        <taxon>eudicotyledons</taxon>
        <taxon>Gunneridae</taxon>
        <taxon>Pentapetalae</taxon>
        <taxon>rosids</taxon>
        <taxon>malvids</taxon>
        <taxon>Brassicales</taxon>
        <taxon>Brassicaceae</taxon>
        <taxon>Camelineae</taxon>
        <taxon>Arabidopsis</taxon>
    </lineage>
</organism>
<feature type="transit peptide" description="Chloroplast" evidence="2">
    <location>
        <begin position="1"/>
        <end status="unknown"/>
    </location>
</feature>
<feature type="transit peptide" description="Thylakoid">
    <location>
        <begin status="unknown"/>
        <end position="69"/>
    </location>
</feature>
<feature type="chain" id="PRO_0000045830" description="Protease Do-like 2, chloroplastic">
    <location>
        <begin position="70"/>
        <end position="607"/>
    </location>
</feature>
<feature type="domain" description="PDZ">
    <location>
        <begin position="308"/>
        <end position="403"/>
    </location>
</feature>
<feature type="region of interest" description="Disordered" evidence="3">
    <location>
        <begin position="41"/>
        <end position="104"/>
    </location>
</feature>
<feature type="region of interest" description="Serine protease">
    <location>
        <begin position="118"/>
        <end position="317"/>
    </location>
</feature>
<feature type="compositionally biased region" description="Basic and acidic residues" evidence="3">
    <location>
        <begin position="87"/>
        <end position="104"/>
    </location>
</feature>
<feature type="active site" description="Charge relay system" evidence="1">
    <location>
        <position position="159"/>
    </location>
</feature>
<feature type="active site" description="Charge relay system" evidence="1">
    <location>
        <position position="190"/>
    </location>
</feature>
<feature type="active site" description="Charge relay system" evidence="1">
    <location>
        <position position="268"/>
    </location>
</feature>
<feature type="helix" evidence="7">
    <location>
        <begin position="113"/>
        <end position="117"/>
    </location>
</feature>
<feature type="strand" evidence="7">
    <location>
        <begin position="118"/>
        <end position="125"/>
    </location>
</feature>
<feature type="strand" evidence="6">
    <location>
        <begin position="130"/>
        <end position="132"/>
    </location>
</feature>
<feature type="strand" evidence="7">
    <location>
        <begin position="140"/>
        <end position="150"/>
    </location>
</feature>
<feature type="strand" evidence="7">
    <location>
        <begin position="153"/>
        <end position="156"/>
    </location>
</feature>
<feature type="helix" evidence="7">
    <location>
        <begin position="158"/>
        <end position="160"/>
    </location>
</feature>
<feature type="strand" evidence="7">
    <location>
        <begin position="164"/>
        <end position="170"/>
    </location>
</feature>
<feature type="strand" evidence="7">
    <location>
        <begin position="178"/>
        <end position="186"/>
    </location>
</feature>
<feature type="turn" evidence="7">
    <location>
        <begin position="187"/>
        <end position="190"/>
    </location>
</feature>
<feature type="strand" evidence="7">
    <location>
        <begin position="191"/>
        <end position="196"/>
    </location>
</feature>
<feature type="helix" evidence="7">
    <location>
        <begin position="199"/>
        <end position="202"/>
    </location>
</feature>
<feature type="strand" evidence="7">
    <location>
        <begin position="219"/>
        <end position="224"/>
    </location>
</feature>
<feature type="strand" evidence="6">
    <location>
        <begin position="227"/>
        <end position="229"/>
    </location>
</feature>
<feature type="strand" evidence="7">
    <location>
        <begin position="233"/>
        <end position="247"/>
    </location>
</feature>
<feature type="turn" evidence="7">
    <location>
        <begin position="248"/>
        <end position="251"/>
    </location>
</feature>
<feature type="strand" evidence="7">
    <location>
        <begin position="252"/>
        <end position="259"/>
    </location>
</feature>
<feature type="turn" evidence="6">
    <location>
        <begin position="265"/>
        <end position="269"/>
    </location>
</feature>
<feature type="strand" evidence="7">
    <location>
        <begin position="271"/>
        <end position="273"/>
    </location>
</feature>
<feature type="strand" evidence="6">
    <location>
        <begin position="275"/>
        <end position="277"/>
    </location>
</feature>
<feature type="strand" evidence="7">
    <location>
        <begin position="279"/>
        <end position="286"/>
    </location>
</feature>
<feature type="strand" evidence="7">
    <location>
        <begin position="296"/>
        <end position="300"/>
    </location>
</feature>
<feature type="helix" evidence="7">
    <location>
        <begin position="301"/>
        <end position="314"/>
    </location>
</feature>
<feature type="strand" evidence="6">
    <location>
        <begin position="325"/>
        <end position="329"/>
    </location>
</feature>
<feature type="helix" evidence="6">
    <location>
        <begin position="333"/>
        <end position="339"/>
    </location>
</feature>
<feature type="strand" evidence="6">
    <location>
        <begin position="342"/>
        <end position="345"/>
    </location>
</feature>
<feature type="strand" evidence="6">
    <location>
        <begin position="347"/>
        <end position="352"/>
    </location>
</feature>
<feature type="helix" evidence="6">
    <location>
        <begin position="357"/>
        <end position="360"/>
    </location>
</feature>
<feature type="strand" evidence="6">
    <location>
        <begin position="367"/>
        <end position="371"/>
    </location>
</feature>
<feature type="strand" evidence="6">
    <location>
        <begin position="377"/>
        <end position="383"/>
    </location>
</feature>
<feature type="strand" evidence="6">
    <location>
        <begin position="389"/>
        <end position="391"/>
    </location>
</feature>
<feature type="helix" evidence="6">
    <location>
        <begin position="393"/>
        <end position="397"/>
    </location>
</feature>
<feature type="strand" evidence="6">
    <location>
        <begin position="404"/>
        <end position="411"/>
    </location>
</feature>
<feature type="strand" evidence="6">
    <location>
        <begin position="414"/>
        <end position="421"/>
    </location>
</feature>
<feature type="strand" evidence="6">
    <location>
        <begin position="446"/>
        <end position="450"/>
    </location>
</feature>
<feature type="helix" evidence="6">
    <location>
        <begin position="453"/>
        <end position="456"/>
    </location>
</feature>
<feature type="strand" evidence="6">
    <location>
        <begin position="461"/>
        <end position="464"/>
    </location>
</feature>
<feature type="helix" evidence="6">
    <location>
        <begin position="466"/>
        <end position="474"/>
    </location>
</feature>
<feature type="strand" evidence="6">
    <location>
        <begin position="485"/>
        <end position="490"/>
    </location>
</feature>
<feature type="helix" evidence="6">
    <location>
        <begin position="494"/>
        <end position="496"/>
    </location>
</feature>
<feature type="strand" evidence="6">
    <location>
        <begin position="504"/>
        <end position="510"/>
    </location>
</feature>
<feature type="helix" evidence="6">
    <location>
        <begin position="518"/>
        <end position="526"/>
    </location>
</feature>
<feature type="strand" evidence="6">
    <location>
        <begin position="530"/>
        <end position="537"/>
    </location>
</feature>
<feature type="strand" evidence="6">
    <location>
        <begin position="542"/>
        <end position="546"/>
    </location>
</feature>
<feature type="helix" evidence="6">
    <location>
        <begin position="547"/>
        <end position="558"/>
    </location>
</feature>
<feature type="turn" evidence="6">
    <location>
        <begin position="559"/>
        <end position="562"/>
    </location>
</feature>
<feature type="helix" evidence="6">
    <location>
        <begin position="569"/>
        <end position="572"/>
    </location>
</feature>
<reference key="1">
    <citation type="journal article" date="2001" name="EMBO J.">
        <title>A chloroplast DegP2 protease performs the primary cleavage of the photodamaged D1 protein in plant photosystem II.</title>
        <authorList>
            <person name="Haussuhl K."/>
            <person name="Andersson B."/>
            <person name="Adamska I."/>
        </authorList>
    </citation>
    <scope>NUCLEOTIDE SEQUENCE [MRNA]</scope>
    <scope>FUNCTION</scope>
    <scope>SUBCELLULAR LOCATION</scope>
    <scope>INDUCTION</scope>
</reference>
<reference key="2">
    <citation type="journal article" date="1999" name="Nature">
        <title>Sequence and analysis of chromosome 2 of the plant Arabidopsis thaliana.</title>
        <authorList>
            <person name="Lin X."/>
            <person name="Kaul S."/>
            <person name="Rounsley S.D."/>
            <person name="Shea T.P."/>
            <person name="Benito M.-I."/>
            <person name="Town C.D."/>
            <person name="Fujii C.Y."/>
            <person name="Mason T.M."/>
            <person name="Bowman C.L."/>
            <person name="Barnstead M.E."/>
            <person name="Feldblyum T.V."/>
            <person name="Buell C.R."/>
            <person name="Ketchum K.A."/>
            <person name="Lee J.J."/>
            <person name="Ronning C.M."/>
            <person name="Koo H.L."/>
            <person name="Moffat K.S."/>
            <person name="Cronin L.A."/>
            <person name="Shen M."/>
            <person name="Pai G."/>
            <person name="Van Aken S."/>
            <person name="Umayam L."/>
            <person name="Tallon L.J."/>
            <person name="Gill J.E."/>
            <person name="Adams M.D."/>
            <person name="Carrera A.J."/>
            <person name="Creasy T.H."/>
            <person name="Goodman H.M."/>
            <person name="Somerville C.R."/>
            <person name="Copenhaver G.P."/>
            <person name="Preuss D."/>
            <person name="Nierman W.C."/>
            <person name="White O."/>
            <person name="Eisen J.A."/>
            <person name="Salzberg S.L."/>
            <person name="Fraser C.M."/>
            <person name="Venter J.C."/>
        </authorList>
    </citation>
    <scope>NUCLEOTIDE SEQUENCE [LARGE SCALE GENOMIC DNA]</scope>
    <source>
        <strain>cv. Columbia</strain>
    </source>
</reference>
<reference key="3">
    <citation type="journal article" date="2017" name="Plant J.">
        <title>Araport11: a complete reannotation of the Arabidopsis thaliana reference genome.</title>
        <authorList>
            <person name="Cheng C.Y."/>
            <person name="Krishnakumar V."/>
            <person name="Chan A.P."/>
            <person name="Thibaud-Nissen F."/>
            <person name="Schobel S."/>
            <person name="Town C.D."/>
        </authorList>
    </citation>
    <scope>GENOME REANNOTATION</scope>
    <source>
        <strain>cv. Columbia</strain>
    </source>
</reference>
<reference key="4">
    <citation type="journal article" date="2003" name="Science">
        <title>Empirical analysis of transcriptional activity in the Arabidopsis genome.</title>
        <authorList>
            <person name="Yamada K."/>
            <person name="Lim J."/>
            <person name="Dale J.M."/>
            <person name="Chen H."/>
            <person name="Shinn P."/>
            <person name="Palm C.J."/>
            <person name="Southwick A.M."/>
            <person name="Wu H.C."/>
            <person name="Kim C.J."/>
            <person name="Nguyen M."/>
            <person name="Pham P.K."/>
            <person name="Cheuk R.F."/>
            <person name="Karlin-Newmann G."/>
            <person name="Liu S.X."/>
            <person name="Lam B."/>
            <person name="Sakano H."/>
            <person name="Wu T."/>
            <person name="Yu G."/>
            <person name="Miranda M."/>
            <person name="Quach H.L."/>
            <person name="Tripp M."/>
            <person name="Chang C.H."/>
            <person name="Lee J.M."/>
            <person name="Toriumi M.J."/>
            <person name="Chan M.M."/>
            <person name="Tang C.C."/>
            <person name="Onodera C.S."/>
            <person name="Deng J.M."/>
            <person name="Akiyama K."/>
            <person name="Ansari Y."/>
            <person name="Arakawa T."/>
            <person name="Banh J."/>
            <person name="Banno F."/>
            <person name="Bowser L."/>
            <person name="Brooks S.Y."/>
            <person name="Carninci P."/>
            <person name="Chao Q."/>
            <person name="Choy N."/>
            <person name="Enju A."/>
            <person name="Goldsmith A.D."/>
            <person name="Gurjal M."/>
            <person name="Hansen N.F."/>
            <person name="Hayashizaki Y."/>
            <person name="Johnson-Hopson C."/>
            <person name="Hsuan V.W."/>
            <person name="Iida K."/>
            <person name="Karnes M."/>
            <person name="Khan S."/>
            <person name="Koesema E."/>
            <person name="Ishida J."/>
            <person name="Jiang P.X."/>
            <person name="Jones T."/>
            <person name="Kawai J."/>
            <person name="Kamiya A."/>
            <person name="Meyers C."/>
            <person name="Nakajima M."/>
            <person name="Narusaka M."/>
            <person name="Seki M."/>
            <person name="Sakurai T."/>
            <person name="Satou M."/>
            <person name="Tamse R."/>
            <person name="Vaysberg M."/>
            <person name="Wallender E.K."/>
            <person name="Wong C."/>
            <person name="Yamamura Y."/>
            <person name="Yuan S."/>
            <person name="Shinozaki K."/>
            <person name="Davis R.W."/>
            <person name="Theologis A."/>
            <person name="Ecker J.R."/>
        </authorList>
    </citation>
    <scope>NUCLEOTIDE SEQUENCE [LARGE SCALE MRNA]</scope>
    <source>
        <strain>cv. Columbia</strain>
    </source>
</reference>
<reference key="5">
    <citation type="journal article" date="2001" name="Plant Physiol.">
        <title>Chloroplast and mitochondrial proteases in Arabidopsis. A proposed nomenclature.</title>
        <authorList>
            <person name="Adam Z."/>
            <person name="Adamska I."/>
            <person name="Nakabayashi K."/>
            <person name="Ostersetzer O."/>
            <person name="Haussuhl K."/>
            <person name="Manuell A."/>
            <person name="Zheng B."/>
            <person name="Vallon O."/>
            <person name="Rodermel S.R."/>
            <person name="Shinozaki K."/>
            <person name="Clarke A.K."/>
        </authorList>
    </citation>
    <scope>GENE FAMILY</scope>
    <scope>NOMENCLATURE</scope>
</reference>
<keyword id="KW-0002">3D-structure</keyword>
<keyword id="KW-0025">Alternative splicing</keyword>
<keyword id="KW-0150">Chloroplast</keyword>
<keyword id="KW-0378">Hydrolase</keyword>
<keyword id="KW-0472">Membrane</keyword>
<keyword id="KW-0934">Plastid</keyword>
<keyword id="KW-0645">Protease</keyword>
<keyword id="KW-1185">Reference proteome</keyword>
<keyword id="KW-0720">Serine protease</keyword>
<keyword id="KW-0793">Thylakoid</keyword>
<keyword id="KW-0809">Transit peptide</keyword>
<comment type="function">
    <text evidence="4">Serine protease that performs the primary cleavage of the photodamaged D1 protein in plant photosystem II.</text>
</comment>
<comment type="subcellular location">
    <subcellularLocation>
        <location evidence="4">Plastid</location>
        <location evidence="4">Chloroplast thylakoid membrane</location>
        <topology evidence="4">Peripheral membrane protein</topology>
        <orientation evidence="4">Stromal side</orientation>
    </subcellularLocation>
</comment>
<comment type="alternative products">
    <event type="alternative splicing"/>
    <isoform>
        <id>O82261-1</id>
        <name>1</name>
        <sequence type="displayed"/>
    </isoform>
    <text>A number of isoforms are produced. According to EST sequences.</text>
</comment>
<comment type="induction">
    <text evidence="4">By high salt, desiccation and light stresses (at protein level).</text>
</comment>
<comment type="similarity">
    <text evidence="5">Belongs to the peptidase S1C family.</text>
</comment>
<protein>
    <recommendedName>
        <fullName>Protease Do-like 2, chloroplastic</fullName>
        <ecNumber>3.4.21.-</ecNumber>
    </recommendedName>
</protein>